<name>C20AA_BACUF</name>
<evidence type="ECO:0000256" key="1">
    <source>
        <dbReference type="SAM" id="MobiDB-lite"/>
    </source>
</evidence>
<evidence type="ECO:0000305" key="2"/>
<feature type="chain" id="PRO_0000174096" description="Pesticidal crystal protein Cry20Aa">
    <location>
        <begin position="1"/>
        <end position="753"/>
    </location>
</feature>
<feature type="region of interest" description="Disordered" evidence="1">
    <location>
        <begin position="680"/>
        <end position="721"/>
    </location>
</feature>
<feature type="compositionally biased region" description="Polar residues" evidence="1">
    <location>
        <begin position="680"/>
        <end position="696"/>
    </location>
</feature>
<feature type="compositionally biased region" description="Low complexity" evidence="1">
    <location>
        <begin position="712"/>
        <end position="721"/>
    </location>
</feature>
<accession>O32321</accession>
<gene>
    <name type="primary">cry20Aa</name>
    <name type="synonym">cryXXA(a)</name>
</gene>
<sequence>MNPYQNNDEIVDVPENYDNNLNRYPYANDPNVAMQNTNYKDWMNGYEEINPSSITAILASIGILNRVIALTGVLGNTQEVISIIQDALGFIRNGTGNELLIHVEQLIQQTLATQYRSAATGAIYGISRSYDNYLMFFRQWERNRTRENGQQVESAFTTINTLCINALAPQASLSRRGFETLLLPNYAMAANFHLLLLRDAVLYRNQWLSNSISTANVNLNILRAAINEYITHCTRWYQDGLNRFDRSSRANMNEWRRFNAYRRDMTLSVLDFATVFPTYDPVLFPAATNVELTRVVYTDPIVMAGGRTAIPGFTRMENLVNSASRVSFLNQMNIYTSFYFRPHNIPRYYWSGNQNFLSNGTSNLYGYRSDGRTTFNVSNIDIFRVNMTTHIGGAFTDDYRGLHRAEFIGANTQNNQRTSLLYSVEIPSSHFRFENHTVFLPGESGLEPNERNYTHRLFQMMNEVSVNPNARGRVFLHAWTHRSLRRTNGLRSDQILQIPAVKTISNGGDRAVVLNYGENIMKLDNLTTGLSYKLTAVDSEASNTRFIVRVRYASMNNNKLNLVLNGAQIASLNVEHTVQRGGSLTDLQYGNFKYATFAGNFKMGSQSILGIFKEIPNIDFVLDKIELIPSNFMSSLEQTQNYNTYNQDTIYTHNQGYDTYDQNSSGMYHQSYNNYDQNMDTTYQPSYDNYNQNASGTYDDGYNPNASDSYDQSYTNNYSQNTNSMYDQGYYNNNYDQHSGCTCNQGYDNNYLK</sequence>
<protein>
    <recommendedName>
        <fullName>Pesticidal crystal protein Cry20Aa</fullName>
    </recommendedName>
    <alternativeName>
        <fullName>86 kDa crystal protein</fullName>
    </alternativeName>
    <alternativeName>
        <fullName>Crystaline entomocidal protoxin</fullName>
    </alternativeName>
    <alternativeName>
        <fullName>Insecticidal delta-endotoxin CryXXA(a)</fullName>
    </alternativeName>
</protein>
<dbReference type="EMBL" id="U82518">
    <property type="protein sequence ID" value="AAB93476.1"/>
    <property type="molecule type" value="Genomic_DNA"/>
</dbReference>
<dbReference type="SMR" id="O32321"/>
<dbReference type="GO" id="GO:0005102">
    <property type="term" value="F:signaling receptor binding"/>
    <property type="evidence" value="ECO:0007669"/>
    <property type="project" value="InterPro"/>
</dbReference>
<dbReference type="GO" id="GO:0090729">
    <property type="term" value="F:toxin activity"/>
    <property type="evidence" value="ECO:0007669"/>
    <property type="project" value="UniProtKB-KW"/>
</dbReference>
<dbReference type="GO" id="GO:0030435">
    <property type="term" value="P:sporulation resulting in formation of a cellular spore"/>
    <property type="evidence" value="ECO:0007669"/>
    <property type="project" value="UniProtKB-KW"/>
</dbReference>
<dbReference type="GO" id="GO:0001907">
    <property type="term" value="P:symbiont-mediated killing of host cell"/>
    <property type="evidence" value="ECO:0007669"/>
    <property type="project" value="InterPro"/>
</dbReference>
<dbReference type="CDD" id="cd04085">
    <property type="entry name" value="delta_endotoxin_C"/>
    <property type="match status" value="1"/>
</dbReference>
<dbReference type="Gene3D" id="2.60.120.260">
    <property type="entry name" value="Galactose-binding domain-like"/>
    <property type="match status" value="1"/>
</dbReference>
<dbReference type="Gene3D" id="2.100.10.10">
    <property type="entry name" value="Pesticidal crystal protein, central domain"/>
    <property type="match status" value="1"/>
</dbReference>
<dbReference type="Gene3D" id="1.20.190.10">
    <property type="entry name" value="Pesticidal crystal protein, N-terminal domain"/>
    <property type="match status" value="1"/>
</dbReference>
<dbReference type="InterPro" id="IPR008979">
    <property type="entry name" value="Galactose-bd-like_sf"/>
</dbReference>
<dbReference type="InterPro" id="IPR038979">
    <property type="entry name" value="Pest_crys"/>
</dbReference>
<dbReference type="InterPro" id="IPR005638">
    <property type="entry name" value="Pest_crys_dom-III"/>
</dbReference>
<dbReference type="InterPro" id="IPR005639">
    <property type="entry name" value="Pest_crys_dom_I"/>
</dbReference>
<dbReference type="InterPro" id="IPR036716">
    <property type="entry name" value="Pest_crys_N_sf"/>
</dbReference>
<dbReference type="InterPro" id="IPR036399">
    <property type="entry name" value="Pest_cryst_cen_dom_sf"/>
</dbReference>
<dbReference type="InterPro" id="IPR001178">
    <property type="entry name" value="Pest_cryst_dom_II"/>
</dbReference>
<dbReference type="PANTHER" id="PTHR37003">
    <property type="entry name" value="ENDOTOXIN_N DOMAIN-CONTAINING PROTEIN-RELATED"/>
    <property type="match status" value="1"/>
</dbReference>
<dbReference type="PANTHER" id="PTHR37003:SF2">
    <property type="entry name" value="PESTICIDAL CRYSTAL PROTEIN N-TERMINAL DOMAIN-CONTAINING PROTEIN"/>
    <property type="match status" value="1"/>
</dbReference>
<dbReference type="Pfam" id="PF03944">
    <property type="entry name" value="Endotoxin_C"/>
    <property type="match status" value="1"/>
</dbReference>
<dbReference type="Pfam" id="PF00555">
    <property type="entry name" value="Endotoxin_M"/>
    <property type="match status" value="1"/>
</dbReference>
<dbReference type="Pfam" id="PF03945">
    <property type="entry name" value="Endotoxin_N"/>
    <property type="match status" value="1"/>
</dbReference>
<dbReference type="SUPFAM" id="SSF51096">
    <property type="entry name" value="delta-Endotoxin (insectocide), middle domain"/>
    <property type="match status" value="1"/>
</dbReference>
<dbReference type="SUPFAM" id="SSF56849">
    <property type="entry name" value="delta-Endotoxin (insectocide), N-terminal domain"/>
    <property type="match status" value="1"/>
</dbReference>
<dbReference type="SUPFAM" id="SSF49785">
    <property type="entry name" value="Galactose-binding domain-like"/>
    <property type="match status" value="1"/>
</dbReference>
<keyword id="KW-0749">Sporulation</keyword>
<keyword id="KW-0800">Toxin</keyword>
<keyword id="KW-0843">Virulence</keyword>
<organism>
    <name type="scientific">Bacillus thuringiensis subsp. fukuokaensis</name>
    <dbReference type="NCBI Taxonomy" id="132265"/>
    <lineage>
        <taxon>Bacteria</taxon>
        <taxon>Bacillati</taxon>
        <taxon>Bacillota</taxon>
        <taxon>Bacilli</taxon>
        <taxon>Bacillales</taxon>
        <taxon>Bacillaceae</taxon>
        <taxon>Bacillus</taxon>
        <taxon>Bacillus cereus group</taxon>
    </lineage>
</organism>
<proteinExistence type="evidence at transcript level"/>
<comment type="function">
    <text>Promotes colloidosmotic lysis by binding to the midgut epithelial cells of mosquitos. Active against Aedes aegypti and Culex quinquefasciatus larvae.</text>
</comment>
<comment type="developmental stage">
    <text>The crystal protein is produced during sporulation and is accumulated both as an inclusion and as part of the spore coat.</text>
</comment>
<comment type="PTM">
    <text>Has low mosquitocidal activity probably due to rapid proteolysis to inactive 56 kDa and 43 kDa proteins.</text>
</comment>
<comment type="miscellaneous">
    <text>Toxic segment of the protein is located in the N-terminus.</text>
</comment>
<comment type="similarity">
    <text evidence="2">Belongs to the delta endotoxin family.</text>
</comment>
<reference key="1">
    <citation type="journal article" date="1997" name="Appl. Environ. Microbiol.">
        <title>Molecular cloning and characterization of a novel mosquitocidal protein gene from Bacillus thuringiensis subsp. fukuokaensis.</title>
        <authorList>
            <person name="Lee H.-K."/>
            <person name="Gill S.S."/>
        </authorList>
    </citation>
    <scope>NUCLEOTIDE SEQUENCE [GENOMIC DNA]</scope>
</reference>